<dbReference type="EC" id="3.1.1.-" evidence="8"/>
<dbReference type="EMBL" id="AC068667">
    <property type="protein sequence ID" value="AAG51756.1"/>
    <property type="molecule type" value="Genomic_DNA"/>
</dbReference>
<dbReference type="EMBL" id="CP002684">
    <property type="protein sequence ID" value="AEE31115.1"/>
    <property type="molecule type" value="Genomic_DNA"/>
</dbReference>
<dbReference type="EMBL" id="AY050413">
    <property type="protein sequence ID" value="AAK91429.1"/>
    <property type="molecule type" value="mRNA"/>
</dbReference>
<dbReference type="EMBL" id="AY133560">
    <property type="protein sequence ID" value="AAM91390.1"/>
    <property type="molecule type" value="mRNA"/>
</dbReference>
<dbReference type="EMBL" id="AY088437">
    <property type="protein sequence ID" value="AAM65973.1"/>
    <property type="molecule type" value="mRNA"/>
</dbReference>
<dbReference type="PIR" id="H86419">
    <property type="entry name" value="H86419"/>
</dbReference>
<dbReference type="RefSeq" id="NP_174259.1">
    <property type="nucleotide sequence ID" value="NM_102706.3"/>
</dbReference>
<dbReference type="SMR" id="Q9C7N5"/>
<dbReference type="FunCoup" id="Q9C7N5">
    <property type="interactions" value="340"/>
</dbReference>
<dbReference type="STRING" id="3702.Q9C7N5"/>
<dbReference type="PaxDb" id="3702-AT1G29660.1"/>
<dbReference type="ProteomicsDB" id="247084"/>
<dbReference type="EnsemblPlants" id="AT1G29660.1">
    <property type="protein sequence ID" value="AT1G29660.1"/>
    <property type="gene ID" value="AT1G29660"/>
</dbReference>
<dbReference type="GeneID" id="839843"/>
<dbReference type="Gramene" id="AT1G29660.1">
    <property type="protein sequence ID" value="AT1G29660.1"/>
    <property type="gene ID" value="AT1G29660"/>
</dbReference>
<dbReference type="KEGG" id="ath:AT1G29660"/>
<dbReference type="Araport" id="AT1G29660"/>
<dbReference type="TAIR" id="AT1G29660"/>
<dbReference type="eggNOG" id="KOG0017">
    <property type="taxonomic scope" value="Eukaryota"/>
</dbReference>
<dbReference type="HOGENOM" id="CLU_015101_0_0_1"/>
<dbReference type="InParanoid" id="Q9C7N5"/>
<dbReference type="OMA" id="PPCLNRD"/>
<dbReference type="PhylomeDB" id="Q9C7N5"/>
<dbReference type="BioCyc" id="ARA:AT1G29660-MONOMER"/>
<dbReference type="CD-CODE" id="4299E36E">
    <property type="entry name" value="Nucleolus"/>
</dbReference>
<dbReference type="PRO" id="PR:Q9C7N5"/>
<dbReference type="Proteomes" id="UP000006548">
    <property type="component" value="Chromosome 1"/>
</dbReference>
<dbReference type="ExpressionAtlas" id="Q9C7N5">
    <property type="expression patterns" value="baseline and differential"/>
</dbReference>
<dbReference type="GO" id="GO:0048046">
    <property type="term" value="C:apoplast"/>
    <property type="evidence" value="ECO:0007005"/>
    <property type="project" value="TAIR"/>
</dbReference>
<dbReference type="GO" id="GO:0005783">
    <property type="term" value="C:endoplasmic reticulum"/>
    <property type="evidence" value="ECO:0000314"/>
    <property type="project" value="TAIR"/>
</dbReference>
<dbReference type="GO" id="GO:0005634">
    <property type="term" value="C:nucleus"/>
    <property type="evidence" value="ECO:0007005"/>
    <property type="project" value="TAIR"/>
</dbReference>
<dbReference type="GO" id="GO:0099503">
    <property type="term" value="C:secretory vesicle"/>
    <property type="evidence" value="ECO:0007005"/>
    <property type="project" value="TAIR"/>
</dbReference>
<dbReference type="GO" id="GO:0016788">
    <property type="term" value="F:hydrolase activity, acting on ester bonds"/>
    <property type="evidence" value="ECO:0007669"/>
    <property type="project" value="InterPro"/>
</dbReference>
<dbReference type="GO" id="GO:0016042">
    <property type="term" value="P:lipid catabolic process"/>
    <property type="evidence" value="ECO:0007669"/>
    <property type="project" value="UniProtKB-KW"/>
</dbReference>
<dbReference type="GO" id="GO:0009627">
    <property type="term" value="P:systemic acquired resistance"/>
    <property type="evidence" value="ECO:0000270"/>
    <property type="project" value="TAIR"/>
</dbReference>
<dbReference type="CDD" id="cd01837">
    <property type="entry name" value="SGNH_plant_lipase_like"/>
    <property type="match status" value="1"/>
</dbReference>
<dbReference type="FunFam" id="3.40.50.1110:FF:000003">
    <property type="entry name" value="GDSL esterase/lipase APG"/>
    <property type="match status" value="1"/>
</dbReference>
<dbReference type="Gene3D" id="3.40.50.1110">
    <property type="entry name" value="SGNH hydrolase"/>
    <property type="match status" value="1"/>
</dbReference>
<dbReference type="InterPro" id="IPR001087">
    <property type="entry name" value="GDSL"/>
</dbReference>
<dbReference type="InterPro" id="IPR051238">
    <property type="entry name" value="GDSL_esterase/lipase"/>
</dbReference>
<dbReference type="InterPro" id="IPR036514">
    <property type="entry name" value="SGNH_hydro_sf"/>
</dbReference>
<dbReference type="InterPro" id="IPR035669">
    <property type="entry name" value="SGNH_plant_lipase-like"/>
</dbReference>
<dbReference type="PANTHER" id="PTHR45650">
    <property type="entry name" value="GDSL-LIKE LIPASE/ACYLHYDROLASE-RELATED"/>
    <property type="match status" value="1"/>
</dbReference>
<dbReference type="PANTHER" id="PTHR45650:SF3">
    <property type="entry name" value="OS01G0748500 PROTEIN"/>
    <property type="match status" value="1"/>
</dbReference>
<dbReference type="Pfam" id="PF00657">
    <property type="entry name" value="Lipase_GDSL"/>
    <property type="match status" value="1"/>
</dbReference>
<dbReference type="SUPFAM" id="SSF52266">
    <property type="entry name" value="SGNH hydrolase"/>
    <property type="match status" value="1"/>
</dbReference>
<reference key="1">
    <citation type="journal article" date="2000" name="Nature">
        <title>Sequence and analysis of chromosome 1 of the plant Arabidopsis thaliana.</title>
        <authorList>
            <person name="Theologis A."/>
            <person name="Ecker J.R."/>
            <person name="Palm C.J."/>
            <person name="Federspiel N.A."/>
            <person name="Kaul S."/>
            <person name="White O."/>
            <person name="Alonso J."/>
            <person name="Altafi H."/>
            <person name="Araujo R."/>
            <person name="Bowman C.L."/>
            <person name="Brooks S.Y."/>
            <person name="Buehler E."/>
            <person name="Chan A."/>
            <person name="Chao Q."/>
            <person name="Chen H."/>
            <person name="Cheuk R.F."/>
            <person name="Chin C.W."/>
            <person name="Chung M.K."/>
            <person name="Conn L."/>
            <person name="Conway A.B."/>
            <person name="Conway A.R."/>
            <person name="Creasy T.H."/>
            <person name="Dewar K."/>
            <person name="Dunn P."/>
            <person name="Etgu P."/>
            <person name="Feldblyum T.V."/>
            <person name="Feng J.-D."/>
            <person name="Fong B."/>
            <person name="Fujii C.Y."/>
            <person name="Gill J.E."/>
            <person name="Goldsmith A.D."/>
            <person name="Haas B."/>
            <person name="Hansen N.F."/>
            <person name="Hughes B."/>
            <person name="Huizar L."/>
            <person name="Hunter J.L."/>
            <person name="Jenkins J."/>
            <person name="Johnson-Hopson C."/>
            <person name="Khan S."/>
            <person name="Khaykin E."/>
            <person name="Kim C.J."/>
            <person name="Koo H.L."/>
            <person name="Kremenetskaia I."/>
            <person name="Kurtz D.B."/>
            <person name="Kwan A."/>
            <person name="Lam B."/>
            <person name="Langin-Hooper S."/>
            <person name="Lee A."/>
            <person name="Lee J.M."/>
            <person name="Lenz C.A."/>
            <person name="Li J.H."/>
            <person name="Li Y.-P."/>
            <person name="Lin X."/>
            <person name="Liu S.X."/>
            <person name="Liu Z.A."/>
            <person name="Luros J.S."/>
            <person name="Maiti R."/>
            <person name="Marziali A."/>
            <person name="Militscher J."/>
            <person name="Miranda M."/>
            <person name="Nguyen M."/>
            <person name="Nierman W.C."/>
            <person name="Osborne B.I."/>
            <person name="Pai G."/>
            <person name="Peterson J."/>
            <person name="Pham P.K."/>
            <person name="Rizzo M."/>
            <person name="Rooney T."/>
            <person name="Rowley D."/>
            <person name="Sakano H."/>
            <person name="Salzberg S.L."/>
            <person name="Schwartz J.R."/>
            <person name="Shinn P."/>
            <person name="Southwick A.M."/>
            <person name="Sun H."/>
            <person name="Tallon L.J."/>
            <person name="Tambunga G."/>
            <person name="Toriumi M.J."/>
            <person name="Town C.D."/>
            <person name="Utterback T."/>
            <person name="Van Aken S."/>
            <person name="Vaysberg M."/>
            <person name="Vysotskaia V.S."/>
            <person name="Walker M."/>
            <person name="Wu D."/>
            <person name="Yu G."/>
            <person name="Fraser C.M."/>
            <person name="Venter J.C."/>
            <person name="Davis R.W."/>
        </authorList>
    </citation>
    <scope>NUCLEOTIDE SEQUENCE [LARGE SCALE GENOMIC DNA]</scope>
    <source>
        <strain>cv. Columbia</strain>
    </source>
</reference>
<reference key="2">
    <citation type="journal article" date="2017" name="Plant J.">
        <title>Araport11: a complete reannotation of the Arabidopsis thaliana reference genome.</title>
        <authorList>
            <person name="Cheng C.Y."/>
            <person name="Krishnakumar V."/>
            <person name="Chan A.P."/>
            <person name="Thibaud-Nissen F."/>
            <person name="Schobel S."/>
            <person name="Town C.D."/>
        </authorList>
    </citation>
    <scope>GENOME REANNOTATION</scope>
    <source>
        <strain>cv. Columbia</strain>
    </source>
</reference>
<reference key="3">
    <citation type="journal article" date="2003" name="Science">
        <title>Empirical analysis of transcriptional activity in the Arabidopsis genome.</title>
        <authorList>
            <person name="Yamada K."/>
            <person name="Lim J."/>
            <person name="Dale J.M."/>
            <person name="Chen H."/>
            <person name="Shinn P."/>
            <person name="Palm C.J."/>
            <person name="Southwick A.M."/>
            <person name="Wu H.C."/>
            <person name="Kim C.J."/>
            <person name="Nguyen M."/>
            <person name="Pham P.K."/>
            <person name="Cheuk R.F."/>
            <person name="Karlin-Newmann G."/>
            <person name="Liu S.X."/>
            <person name="Lam B."/>
            <person name="Sakano H."/>
            <person name="Wu T."/>
            <person name="Yu G."/>
            <person name="Miranda M."/>
            <person name="Quach H.L."/>
            <person name="Tripp M."/>
            <person name="Chang C.H."/>
            <person name="Lee J.M."/>
            <person name="Toriumi M.J."/>
            <person name="Chan M.M."/>
            <person name="Tang C.C."/>
            <person name="Onodera C.S."/>
            <person name="Deng J.M."/>
            <person name="Akiyama K."/>
            <person name="Ansari Y."/>
            <person name="Arakawa T."/>
            <person name="Banh J."/>
            <person name="Banno F."/>
            <person name="Bowser L."/>
            <person name="Brooks S.Y."/>
            <person name="Carninci P."/>
            <person name="Chao Q."/>
            <person name="Choy N."/>
            <person name="Enju A."/>
            <person name="Goldsmith A.D."/>
            <person name="Gurjal M."/>
            <person name="Hansen N.F."/>
            <person name="Hayashizaki Y."/>
            <person name="Johnson-Hopson C."/>
            <person name="Hsuan V.W."/>
            <person name="Iida K."/>
            <person name="Karnes M."/>
            <person name="Khan S."/>
            <person name="Koesema E."/>
            <person name="Ishida J."/>
            <person name="Jiang P.X."/>
            <person name="Jones T."/>
            <person name="Kawai J."/>
            <person name="Kamiya A."/>
            <person name="Meyers C."/>
            <person name="Nakajima M."/>
            <person name="Narusaka M."/>
            <person name="Seki M."/>
            <person name="Sakurai T."/>
            <person name="Satou M."/>
            <person name="Tamse R."/>
            <person name="Vaysberg M."/>
            <person name="Wallender E.K."/>
            <person name="Wong C."/>
            <person name="Yamamura Y."/>
            <person name="Yuan S."/>
            <person name="Shinozaki K."/>
            <person name="Davis R.W."/>
            <person name="Theologis A."/>
            <person name="Ecker J.R."/>
        </authorList>
    </citation>
    <scope>NUCLEOTIDE SEQUENCE [LARGE SCALE MRNA]</scope>
    <source>
        <strain>cv. Columbia</strain>
    </source>
</reference>
<reference key="4">
    <citation type="submission" date="2002-03" db="EMBL/GenBank/DDBJ databases">
        <title>Full-length cDNA from Arabidopsis thaliana.</title>
        <authorList>
            <person name="Brover V.V."/>
            <person name="Troukhan M.E."/>
            <person name="Alexandrov N.A."/>
            <person name="Lu Y.-P."/>
            <person name="Flavell R.B."/>
            <person name="Feldmann K.A."/>
        </authorList>
    </citation>
    <scope>NUCLEOTIDE SEQUENCE [LARGE SCALE MRNA]</scope>
</reference>
<reference key="5">
    <citation type="journal article" date="2004" name="Prog. Lipid Res.">
        <title>GDSL family of serine esterases/lipases.</title>
        <authorList>
            <person name="Akoh C.C."/>
            <person name="Lee G.-C."/>
            <person name="Liaw Y.-C."/>
            <person name="Huang T.-H."/>
            <person name="Shaw J.-F."/>
        </authorList>
    </citation>
    <scope>REVIEW</scope>
</reference>
<reference key="6">
    <citation type="journal article" date="2008" name="Pak. J. Biol. Sci.">
        <title>Sequence analysis of GDSL lipase gene family in Arabidopsis thaliana.</title>
        <authorList>
            <person name="Ling H."/>
        </authorList>
    </citation>
    <scope>GENE FAMILY</scope>
</reference>
<reference key="7">
    <citation type="journal article" date="2009" name="Plant Signal. Behav.">
        <title>The Arabidopsis chromatin modifier ATX1, the myotubularin-like AtMTM and the response to drought.</title>
        <authorList>
            <person name="Ding Y."/>
            <person name="Lapko H."/>
            <person name="Ndamukong I."/>
            <person name="Xia Y."/>
            <person name="Al-Abdallat A."/>
            <person name="Lalithambika S."/>
            <person name="Sadder M."/>
            <person name="Saleh A."/>
            <person name="Fromm M."/>
            <person name="Riethoven J.-J."/>
            <person name="Lu G."/>
            <person name="Avramova Z."/>
        </authorList>
    </citation>
    <scope>INDUCTION BY DROUGHT</scope>
</reference>
<reference key="8">
    <citation type="journal article" date="2012" name="Front. Plant Sci.">
        <title>New aspects of Phloem-mediated long-distance lipid signaling in plants.</title>
        <authorList>
            <person name="Benning U.F."/>
            <person name="Tamot B."/>
            <person name="Guelette B.S."/>
            <person name="Hoffmann-Benning S."/>
        </authorList>
    </citation>
    <scope>TISSUE SPECIFICITY</scope>
</reference>
<reference key="9">
    <citation type="journal article" date="2014" name="Plant Physiol.">
        <title>Contrasting roles of the apoplastic aspartyl protease APOPLASTIC, ENHANCED DISEASE SUSCEPTIBILITY1-DEPENDENT1 and LEGUME LECTIN-LIKE PROTEIN1 in Arabidopsis systemic acquired resistance.</title>
        <authorList>
            <person name="Breitenbach H.H."/>
            <person name="Wenig M."/>
            <person name="Wittek F."/>
            <person name="Jorda L."/>
            <person name="Maldonado-Alconada A.M."/>
            <person name="Sarioglu H."/>
            <person name="Colby T."/>
            <person name="Knappe C."/>
            <person name="Bichlmeier M."/>
            <person name="Pabst E."/>
            <person name="Mackey D."/>
            <person name="Parker J.E."/>
            <person name="Vlot A.C."/>
        </authorList>
    </citation>
    <scope>FUNCTION</scope>
    <scope>IDENTIFICATION BY MASS SPECTROMETRY</scope>
    <scope>SUBCELLULAR LOCATION</scope>
    <scope>INDUCTION BY PATHOGEN</scope>
</reference>
<keyword id="KW-0052">Apoplast</keyword>
<keyword id="KW-0378">Hydrolase</keyword>
<keyword id="KW-0442">Lipid degradation</keyword>
<keyword id="KW-0443">Lipid metabolism</keyword>
<keyword id="KW-1185">Reference proteome</keyword>
<keyword id="KW-0964">Secreted</keyword>
<keyword id="KW-0732">Signal</keyword>
<accession>Q9C7N5</accession>
<accession>Q8L9H1</accession>
<feature type="signal peptide" evidence="2">
    <location>
        <begin position="1"/>
        <end position="26"/>
    </location>
</feature>
<feature type="chain" id="PRO_0000367356" description="GDSL esterase/lipase At1g29660">
    <location>
        <begin position="27"/>
        <end position="364"/>
    </location>
</feature>
<feature type="active site" description="Nucleophile" evidence="1">
    <location>
        <position position="39"/>
    </location>
</feature>
<feature type="active site" description="Charge relay system" evidence="1">
    <location>
        <position position="328"/>
    </location>
</feature>
<feature type="active site" description="Charge relay system" evidence="1">
    <location>
        <position position="331"/>
    </location>
</feature>
<feature type="sequence conflict" description="In Ref. 4; AAM65973." evidence="8" ref="4">
    <original>Q</original>
    <variation>E</variation>
    <location>
        <position position="235"/>
    </location>
</feature>
<feature type="sequence conflict" description="In Ref. 4; AAM65973." evidence="8" ref="4">
    <original>A</original>
    <variation>T</variation>
    <location>
        <position position="285"/>
    </location>
</feature>
<protein>
    <recommendedName>
        <fullName evidence="6">GDSL esterase/lipase At1g29660</fullName>
        <ecNumber evidence="8">3.1.1.-</ecNumber>
    </recommendedName>
    <alternativeName>
        <fullName evidence="7">Apoplastic EDS1-dependent protein 3</fullName>
    </alternativeName>
    <alternativeName>
        <fullName>Extracellular lipase At1g29660</fullName>
    </alternativeName>
</protein>
<evidence type="ECO:0000250" key="1">
    <source>
        <dbReference type="UniProtKB" id="Q09LX1"/>
    </source>
</evidence>
<evidence type="ECO:0000255" key="2"/>
<evidence type="ECO:0000269" key="3">
    <source>
    </source>
</evidence>
<evidence type="ECO:0000269" key="4">
    <source>
    </source>
</evidence>
<evidence type="ECO:0000269" key="5">
    <source>
    </source>
</evidence>
<evidence type="ECO:0000303" key="6">
    <source>
    </source>
</evidence>
<evidence type="ECO:0000303" key="7">
    <source>
    </source>
</evidence>
<evidence type="ECO:0000305" key="8"/>
<evidence type="ECO:0000312" key="9">
    <source>
        <dbReference type="Araport" id="AT1G29660"/>
    </source>
</evidence>
<evidence type="ECO:0000312" key="10">
    <source>
        <dbReference type="EMBL" id="AAG51756.1"/>
    </source>
</evidence>
<proteinExistence type="evidence at protein level"/>
<sequence length="364" mass="40142">MESYLRKWCLVSVWVLLLGLGFKVKAEPQVPCYFIFGDSLVDNGNNNRLRSIARADYFPYGIDFGGPTGRFSNGRTTVDVLTELLGFDNYIPAYSTVSGQEILQGVNYASAAAGIREETGAQLGQRITFSGQVENYKNTVAQVVEILGDEYTAADYLKRCIYSVGMGSNDYLNNYFMPQFYSTSRQYTPEQYADDLISRYRDQLNALYNYGARKFALVGIGAIGCSPNALAQGSQDGTTCVERINSANRIFNNRLISMVQQLNNAHSDASFTYINAYGAFQDIIANPSAYGFTNTNTACCGIGRNGGQLTCLPGEPPCLNRDEYVFWDAFHPSAAANTAIAKRSYNAQRSSDVYPIDISQLAQL</sequence>
<comment type="function">
    <text evidence="5">Involved in EDS1-dependent systemic acquired resistance, maybe in phloem-mediated long-distance signaling.</text>
</comment>
<comment type="subcellular location">
    <subcellularLocation>
        <location evidence="5">Secreted</location>
        <location evidence="5">Extracellular space</location>
        <location evidence="5">Apoplast</location>
    </subcellularLocation>
</comment>
<comment type="tissue specificity">
    <text evidence="4">Found in phloem exudates.</text>
</comment>
<comment type="induction">
    <text evidence="3 5">Down-regulated by drought (PubMed:19901554). Down-regulated by virulent or avirulent pathogen infection (PubMed:24755512).</text>
</comment>
<comment type="similarity">
    <text evidence="8">Belongs to the 'GDSL' lipolytic enzyme family.</text>
</comment>
<gene>
    <name evidence="9" type="ordered locus">At1g29660</name>
    <name evidence="10" type="ORF">F15D2.21</name>
</gene>
<organism>
    <name type="scientific">Arabidopsis thaliana</name>
    <name type="common">Mouse-ear cress</name>
    <dbReference type="NCBI Taxonomy" id="3702"/>
    <lineage>
        <taxon>Eukaryota</taxon>
        <taxon>Viridiplantae</taxon>
        <taxon>Streptophyta</taxon>
        <taxon>Embryophyta</taxon>
        <taxon>Tracheophyta</taxon>
        <taxon>Spermatophyta</taxon>
        <taxon>Magnoliopsida</taxon>
        <taxon>eudicotyledons</taxon>
        <taxon>Gunneridae</taxon>
        <taxon>Pentapetalae</taxon>
        <taxon>rosids</taxon>
        <taxon>malvids</taxon>
        <taxon>Brassicales</taxon>
        <taxon>Brassicaceae</taxon>
        <taxon>Camelineae</taxon>
        <taxon>Arabidopsis</taxon>
    </lineage>
</organism>
<name>GDL14_ARATH</name>